<gene>
    <name evidence="1" type="primary">valS</name>
    <name type="ordered locus">RBE_0509</name>
</gene>
<accession>Q1RJ74</accession>
<name>SYV_RICBR</name>
<proteinExistence type="inferred from homology"/>
<comment type="function">
    <text evidence="1">Catalyzes the attachment of valine to tRNA(Val). As ValRS can inadvertently accommodate and process structurally similar amino acids such as threonine, to avoid such errors, it has a 'posttransfer' editing activity that hydrolyzes mischarged Thr-tRNA(Val) in a tRNA-dependent manner.</text>
</comment>
<comment type="catalytic activity">
    <reaction evidence="1">
        <text>tRNA(Val) + L-valine + ATP = L-valyl-tRNA(Val) + AMP + diphosphate</text>
        <dbReference type="Rhea" id="RHEA:10704"/>
        <dbReference type="Rhea" id="RHEA-COMP:9672"/>
        <dbReference type="Rhea" id="RHEA-COMP:9708"/>
        <dbReference type="ChEBI" id="CHEBI:30616"/>
        <dbReference type="ChEBI" id="CHEBI:33019"/>
        <dbReference type="ChEBI" id="CHEBI:57762"/>
        <dbReference type="ChEBI" id="CHEBI:78442"/>
        <dbReference type="ChEBI" id="CHEBI:78537"/>
        <dbReference type="ChEBI" id="CHEBI:456215"/>
        <dbReference type="EC" id="6.1.1.9"/>
    </reaction>
</comment>
<comment type="subunit">
    <text evidence="1">Monomer.</text>
</comment>
<comment type="subcellular location">
    <subcellularLocation>
        <location evidence="1">Cytoplasm</location>
    </subcellularLocation>
</comment>
<comment type="domain">
    <text evidence="1">ValRS has two distinct active sites: one for aminoacylation and one for editing. The misactivated threonine is translocated from the active site to the editing site.</text>
</comment>
<comment type="similarity">
    <text evidence="1">Belongs to the class-I aminoacyl-tRNA synthetase family. ValS type 2 subfamily.</text>
</comment>
<organism>
    <name type="scientific">Rickettsia bellii (strain RML369-C)</name>
    <dbReference type="NCBI Taxonomy" id="336407"/>
    <lineage>
        <taxon>Bacteria</taxon>
        <taxon>Pseudomonadati</taxon>
        <taxon>Pseudomonadota</taxon>
        <taxon>Alphaproteobacteria</taxon>
        <taxon>Rickettsiales</taxon>
        <taxon>Rickettsiaceae</taxon>
        <taxon>Rickettsieae</taxon>
        <taxon>Rickettsia</taxon>
        <taxon>belli group</taxon>
    </lineage>
</organism>
<dbReference type="EC" id="6.1.1.9" evidence="1"/>
<dbReference type="EMBL" id="CP000087">
    <property type="protein sequence ID" value="ABE04590.1"/>
    <property type="molecule type" value="Genomic_DNA"/>
</dbReference>
<dbReference type="RefSeq" id="WP_011477181.1">
    <property type="nucleotide sequence ID" value="NC_007940.1"/>
</dbReference>
<dbReference type="SMR" id="Q1RJ74"/>
<dbReference type="KEGG" id="rbe:RBE_0509"/>
<dbReference type="eggNOG" id="COG0525">
    <property type="taxonomic scope" value="Bacteria"/>
</dbReference>
<dbReference type="HOGENOM" id="CLU_001493_0_2_5"/>
<dbReference type="OrthoDB" id="9810365at2"/>
<dbReference type="Proteomes" id="UP000001951">
    <property type="component" value="Chromosome"/>
</dbReference>
<dbReference type="GO" id="GO:0005829">
    <property type="term" value="C:cytosol"/>
    <property type="evidence" value="ECO:0007669"/>
    <property type="project" value="TreeGrafter"/>
</dbReference>
<dbReference type="GO" id="GO:0002161">
    <property type="term" value="F:aminoacyl-tRNA deacylase activity"/>
    <property type="evidence" value="ECO:0007669"/>
    <property type="project" value="InterPro"/>
</dbReference>
<dbReference type="GO" id="GO:0005524">
    <property type="term" value="F:ATP binding"/>
    <property type="evidence" value="ECO:0007669"/>
    <property type="project" value="UniProtKB-UniRule"/>
</dbReference>
<dbReference type="GO" id="GO:0004832">
    <property type="term" value="F:valine-tRNA ligase activity"/>
    <property type="evidence" value="ECO:0007669"/>
    <property type="project" value="UniProtKB-UniRule"/>
</dbReference>
<dbReference type="GO" id="GO:0006438">
    <property type="term" value="P:valyl-tRNA aminoacylation"/>
    <property type="evidence" value="ECO:0007669"/>
    <property type="project" value="UniProtKB-UniRule"/>
</dbReference>
<dbReference type="CDD" id="cd07962">
    <property type="entry name" value="Anticodon_Ia_Val"/>
    <property type="match status" value="1"/>
</dbReference>
<dbReference type="FunFam" id="1.10.730.10:FF:000033">
    <property type="entry name" value="Valine--tRNA ligase"/>
    <property type="match status" value="1"/>
</dbReference>
<dbReference type="FunFam" id="3.40.50.620:FF:000192">
    <property type="entry name" value="Valine--tRNA ligase"/>
    <property type="match status" value="1"/>
</dbReference>
<dbReference type="Gene3D" id="3.40.50.620">
    <property type="entry name" value="HUPs"/>
    <property type="match status" value="2"/>
</dbReference>
<dbReference type="Gene3D" id="1.10.730.10">
    <property type="entry name" value="Isoleucyl-tRNA Synthetase, Domain 1"/>
    <property type="match status" value="1"/>
</dbReference>
<dbReference type="HAMAP" id="MF_02005">
    <property type="entry name" value="Val_tRNA_synth_type2"/>
    <property type="match status" value="1"/>
</dbReference>
<dbReference type="InterPro" id="IPR001412">
    <property type="entry name" value="aa-tRNA-synth_I_CS"/>
</dbReference>
<dbReference type="InterPro" id="IPR002300">
    <property type="entry name" value="aa-tRNA-synth_Ia"/>
</dbReference>
<dbReference type="InterPro" id="IPR033705">
    <property type="entry name" value="Anticodon_Ia_Val"/>
</dbReference>
<dbReference type="InterPro" id="IPR013155">
    <property type="entry name" value="M/V/L/I-tRNA-synth_anticd-bd"/>
</dbReference>
<dbReference type="InterPro" id="IPR014729">
    <property type="entry name" value="Rossmann-like_a/b/a_fold"/>
</dbReference>
<dbReference type="InterPro" id="IPR009080">
    <property type="entry name" value="tRNAsynth_Ia_anticodon-bd"/>
</dbReference>
<dbReference type="InterPro" id="IPR009008">
    <property type="entry name" value="Val/Leu/Ile-tRNA-synth_edit"/>
</dbReference>
<dbReference type="InterPro" id="IPR022874">
    <property type="entry name" value="Valine-tRNA_ligase_type_2"/>
</dbReference>
<dbReference type="InterPro" id="IPR002303">
    <property type="entry name" value="Valyl-tRNA_ligase"/>
</dbReference>
<dbReference type="NCBIfam" id="NF009687">
    <property type="entry name" value="PRK13208.1"/>
    <property type="match status" value="1"/>
</dbReference>
<dbReference type="NCBIfam" id="TIGR00422">
    <property type="entry name" value="valS"/>
    <property type="match status" value="1"/>
</dbReference>
<dbReference type="PANTHER" id="PTHR11946:SF93">
    <property type="entry name" value="VALINE--TRNA LIGASE, CHLOROPLASTIC_MITOCHONDRIAL 2"/>
    <property type="match status" value="1"/>
</dbReference>
<dbReference type="PANTHER" id="PTHR11946">
    <property type="entry name" value="VALYL-TRNA SYNTHETASES"/>
    <property type="match status" value="1"/>
</dbReference>
<dbReference type="Pfam" id="PF08264">
    <property type="entry name" value="Anticodon_1"/>
    <property type="match status" value="1"/>
</dbReference>
<dbReference type="Pfam" id="PF00133">
    <property type="entry name" value="tRNA-synt_1"/>
    <property type="match status" value="1"/>
</dbReference>
<dbReference type="PRINTS" id="PR00986">
    <property type="entry name" value="TRNASYNTHVAL"/>
</dbReference>
<dbReference type="SUPFAM" id="SSF47323">
    <property type="entry name" value="Anticodon-binding domain of a subclass of class I aminoacyl-tRNA synthetases"/>
    <property type="match status" value="1"/>
</dbReference>
<dbReference type="SUPFAM" id="SSF52374">
    <property type="entry name" value="Nucleotidylyl transferase"/>
    <property type="match status" value="1"/>
</dbReference>
<dbReference type="SUPFAM" id="SSF50677">
    <property type="entry name" value="ValRS/IleRS/LeuRS editing domain"/>
    <property type="match status" value="1"/>
</dbReference>
<dbReference type="PROSITE" id="PS00178">
    <property type="entry name" value="AA_TRNA_LIGASE_I"/>
    <property type="match status" value="1"/>
</dbReference>
<keyword id="KW-0030">Aminoacyl-tRNA synthetase</keyword>
<keyword id="KW-0067">ATP-binding</keyword>
<keyword id="KW-0963">Cytoplasm</keyword>
<keyword id="KW-0436">Ligase</keyword>
<keyword id="KW-0547">Nucleotide-binding</keyword>
<keyword id="KW-0648">Protein biosynthesis</keyword>
<reference key="1">
    <citation type="journal article" date="2006" name="PLoS Genet.">
        <title>Genome sequence of Rickettsia bellii illuminates the role of amoebae in gene exchanges between intracellular pathogens.</title>
        <authorList>
            <person name="Ogata H."/>
            <person name="La Scola B."/>
            <person name="Audic S."/>
            <person name="Renesto P."/>
            <person name="Blanc G."/>
            <person name="Robert C."/>
            <person name="Fournier P.-E."/>
            <person name="Claverie J.-M."/>
            <person name="Raoult D."/>
        </authorList>
    </citation>
    <scope>NUCLEOTIDE SEQUENCE [LARGE SCALE GENOMIC DNA]</scope>
    <source>
        <strain>RML369-C</strain>
    </source>
</reference>
<feature type="chain" id="PRO_0000272363" description="Valine--tRNA ligase">
    <location>
        <begin position="1"/>
        <end position="812"/>
    </location>
</feature>
<feature type="short sequence motif" description="'HIGH' region">
    <location>
        <begin position="46"/>
        <end position="56"/>
    </location>
</feature>
<feature type="short sequence motif" description="'KMSKS' region">
    <location>
        <begin position="536"/>
        <end position="540"/>
    </location>
</feature>
<feature type="binding site" evidence="1">
    <location>
        <position position="539"/>
    </location>
    <ligand>
        <name>ATP</name>
        <dbReference type="ChEBI" id="CHEBI:30616"/>
    </ligand>
</feature>
<sequence>MKEFPKNYNFIESEKKWQKIWQEKQIYAYDENIAKDETFVVDTPPPTVSGQLHIGHVYSYTQTDFIVRFQRMMGKNIFYPMGFDDNGLPTERLVEKQRQVKAYNMGREEFINICNEVVASEEEKFRSLFNQIALSVDWNLEYQTISPLSRKISQMSFLDLVKKGEVYRNNQPILWDPVDGTALAQADIEDKEKTSFMNYITFKTEANDEFTIATTRPELLPACVAVFYHPDDKRYQHLAGKFAVTPLFNVKVPLLADPLVQQDKGTGLVMCCTFGDQTDITWWKTHNLPLNTIITKKGTIDFPHEIGIDGLKIKEARAKIIDILKEQELFVKQEEITQTVKCAERSGAPLEVLTVPQWFVKTISHKDELLKRANELNWHPKNMKIRLDNWINAISWDWCISRQRYFGVPFPVWYSKRIGEEGKILYADISQLPVDPLKDLPIGYSKYEVEPDLDVMDTWATSSVSPQLSTWGISDEFAVNKDRHGKLFPMDLRPQAHEIIRTWAFYTILKAHLHQNTLPWKNIMVSGWCLAEDRSKMSKSKGNVLVPEKLLEQYGSDVIRYWSANSKLGADTAYSEDVMKNGKRLVNKLWNAAKFVSQHFDKLSDEDKKTNLIDVKEKITHEFDQWIINKLVELVNNATNELQNYEYANAMHLTEKFFWSVFCDNYLEISKTRAYDEENKNPSGQYSSVLTLYHVMQTLLKLFAPFMPHITEELYQILYSENSIHIKGNWINYGNLNYKIDAKQPERLLEILDHVRKFKAEKNLSIKAEVQLLEVSGIELSKELTSDLKNVTSAKEVKFKPTNDEIKVSILT</sequence>
<evidence type="ECO:0000255" key="1">
    <source>
        <dbReference type="HAMAP-Rule" id="MF_02005"/>
    </source>
</evidence>
<protein>
    <recommendedName>
        <fullName evidence="1">Valine--tRNA ligase</fullName>
        <ecNumber evidence="1">6.1.1.9</ecNumber>
    </recommendedName>
    <alternativeName>
        <fullName evidence="1">Valyl-tRNA synthetase</fullName>
        <shortName evidence="1">ValRS</shortName>
    </alternativeName>
</protein>